<reference key="1">
    <citation type="journal article" date="2001" name="Nature">
        <title>Genome sequence of Yersinia pestis, the causative agent of plague.</title>
        <authorList>
            <person name="Parkhill J."/>
            <person name="Wren B.W."/>
            <person name="Thomson N.R."/>
            <person name="Titball R.W."/>
            <person name="Holden M.T.G."/>
            <person name="Prentice M.B."/>
            <person name="Sebaihia M."/>
            <person name="James K.D."/>
            <person name="Churcher C.M."/>
            <person name="Mungall K.L."/>
            <person name="Baker S."/>
            <person name="Basham D."/>
            <person name="Bentley S.D."/>
            <person name="Brooks K."/>
            <person name="Cerdeno-Tarraga A.-M."/>
            <person name="Chillingworth T."/>
            <person name="Cronin A."/>
            <person name="Davies R.M."/>
            <person name="Davis P."/>
            <person name="Dougan G."/>
            <person name="Feltwell T."/>
            <person name="Hamlin N."/>
            <person name="Holroyd S."/>
            <person name="Jagels K."/>
            <person name="Karlyshev A.V."/>
            <person name="Leather S."/>
            <person name="Moule S."/>
            <person name="Oyston P.C.F."/>
            <person name="Quail M.A."/>
            <person name="Rutherford K.M."/>
            <person name="Simmonds M."/>
            <person name="Skelton J."/>
            <person name="Stevens K."/>
            <person name="Whitehead S."/>
            <person name="Barrell B.G."/>
        </authorList>
    </citation>
    <scope>NUCLEOTIDE SEQUENCE [LARGE SCALE GENOMIC DNA]</scope>
    <source>
        <strain>CO-92 / Biovar Orientalis</strain>
    </source>
</reference>
<reference key="2">
    <citation type="journal article" date="2002" name="J. Bacteriol.">
        <title>Genome sequence of Yersinia pestis KIM.</title>
        <authorList>
            <person name="Deng W."/>
            <person name="Burland V."/>
            <person name="Plunkett G. III"/>
            <person name="Boutin A."/>
            <person name="Mayhew G.F."/>
            <person name="Liss P."/>
            <person name="Perna N.T."/>
            <person name="Rose D.J."/>
            <person name="Mau B."/>
            <person name="Zhou S."/>
            <person name="Schwartz D.C."/>
            <person name="Fetherston J.D."/>
            <person name="Lindler L.E."/>
            <person name="Brubaker R.R."/>
            <person name="Plano G.V."/>
            <person name="Straley S.C."/>
            <person name="McDonough K.A."/>
            <person name="Nilles M.L."/>
            <person name="Matson J.S."/>
            <person name="Blattner F.R."/>
            <person name="Perry R.D."/>
        </authorList>
    </citation>
    <scope>NUCLEOTIDE SEQUENCE [LARGE SCALE GENOMIC DNA]</scope>
    <source>
        <strain>KIM10+ / Biovar Mediaevalis</strain>
    </source>
</reference>
<reference key="3">
    <citation type="journal article" date="2004" name="DNA Res.">
        <title>Complete genome sequence of Yersinia pestis strain 91001, an isolate avirulent to humans.</title>
        <authorList>
            <person name="Song Y."/>
            <person name="Tong Z."/>
            <person name="Wang J."/>
            <person name="Wang L."/>
            <person name="Guo Z."/>
            <person name="Han Y."/>
            <person name="Zhang J."/>
            <person name="Pei D."/>
            <person name="Zhou D."/>
            <person name="Qin H."/>
            <person name="Pang X."/>
            <person name="Han Y."/>
            <person name="Zhai J."/>
            <person name="Li M."/>
            <person name="Cui B."/>
            <person name="Qi Z."/>
            <person name="Jin L."/>
            <person name="Dai R."/>
            <person name="Chen F."/>
            <person name="Li S."/>
            <person name="Ye C."/>
            <person name="Du Z."/>
            <person name="Lin W."/>
            <person name="Wang J."/>
            <person name="Yu J."/>
            <person name="Yang H."/>
            <person name="Wang J."/>
            <person name="Huang P."/>
            <person name="Yang R."/>
        </authorList>
    </citation>
    <scope>NUCLEOTIDE SEQUENCE [LARGE SCALE GENOMIC DNA]</scope>
    <source>
        <strain>91001 / Biovar Mediaevalis</strain>
    </source>
</reference>
<proteinExistence type="inferred from homology"/>
<protein>
    <recommendedName>
        <fullName evidence="1">L-seryl-tRNA(Sec) selenium transferase</fullName>
        <ecNumber evidence="1">2.9.1.1</ecNumber>
    </recommendedName>
    <alternativeName>
        <fullName evidence="1">Selenocysteine synthase</fullName>
        <shortName evidence="1">Sec synthase</shortName>
    </alternativeName>
    <alternativeName>
        <fullName evidence="1">Selenocysteinyl-tRNA(Sec) synthase</fullName>
    </alternativeName>
</protein>
<accession>Q8Z9Y1</accession>
<accession>Q0W9X5</accession>
<organism>
    <name type="scientific">Yersinia pestis</name>
    <dbReference type="NCBI Taxonomy" id="632"/>
    <lineage>
        <taxon>Bacteria</taxon>
        <taxon>Pseudomonadati</taxon>
        <taxon>Pseudomonadota</taxon>
        <taxon>Gammaproteobacteria</taxon>
        <taxon>Enterobacterales</taxon>
        <taxon>Yersiniaceae</taxon>
        <taxon>Yersinia</taxon>
    </lineage>
</organism>
<comment type="function">
    <text evidence="1">Converts seryl-tRNA(Sec) to selenocysteinyl-tRNA(Sec) required for selenoprotein biosynthesis.</text>
</comment>
<comment type="catalytic activity">
    <reaction evidence="1">
        <text>L-seryl-tRNA(Sec) + selenophosphate + H(+) = L-selenocysteinyl-tRNA(Sec) + phosphate</text>
        <dbReference type="Rhea" id="RHEA:22728"/>
        <dbReference type="Rhea" id="RHEA-COMP:9742"/>
        <dbReference type="Rhea" id="RHEA-COMP:9743"/>
        <dbReference type="ChEBI" id="CHEBI:15378"/>
        <dbReference type="ChEBI" id="CHEBI:16144"/>
        <dbReference type="ChEBI" id="CHEBI:43474"/>
        <dbReference type="ChEBI" id="CHEBI:78533"/>
        <dbReference type="ChEBI" id="CHEBI:78573"/>
        <dbReference type="EC" id="2.9.1.1"/>
    </reaction>
</comment>
<comment type="cofactor">
    <cofactor evidence="1">
        <name>pyridoxal 5'-phosphate</name>
        <dbReference type="ChEBI" id="CHEBI:597326"/>
    </cofactor>
</comment>
<comment type="pathway">
    <text evidence="1">Aminoacyl-tRNA biosynthesis; selenocysteinyl-tRNA(Sec) biosynthesis; selenocysteinyl-tRNA(Sec) from L-seryl-tRNA(Sec) (bacterial route): step 1/1.</text>
</comment>
<comment type="subunit">
    <text evidence="1">Homodecamer; pentamer of dimers. Binds only one seryl-tRNA(Sec) per dimer.</text>
</comment>
<comment type="subcellular location">
    <subcellularLocation>
        <location evidence="1">Cytoplasm</location>
    </subcellularLocation>
</comment>
<comment type="similarity">
    <text evidence="1">Belongs to the SelA family.</text>
</comment>
<comment type="sequence caution" evidence="2">
    <conflict type="erroneous initiation">
        <sequence resource="EMBL-CDS" id="AAM87618"/>
    </conflict>
</comment>
<comment type="sequence caution" evidence="2">
    <conflict type="erroneous initiation">
        <sequence resource="EMBL-CDS" id="AAS64107"/>
    </conflict>
</comment>
<evidence type="ECO:0000255" key="1">
    <source>
        <dbReference type="HAMAP-Rule" id="MF_00423"/>
    </source>
</evidence>
<evidence type="ECO:0000305" key="2"/>
<dbReference type="EC" id="2.9.1.1" evidence="1"/>
<dbReference type="EMBL" id="AL590842">
    <property type="protein sequence ID" value="CAL22628.1"/>
    <property type="molecule type" value="Genomic_DNA"/>
</dbReference>
<dbReference type="EMBL" id="AE009952">
    <property type="protein sequence ID" value="AAM87618.1"/>
    <property type="status" value="ALT_INIT"/>
    <property type="molecule type" value="Genomic_DNA"/>
</dbReference>
<dbReference type="EMBL" id="AE017042">
    <property type="protein sequence ID" value="AAS64107.1"/>
    <property type="status" value="ALT_INIT"/>
    <property type="molecule type" value="Genomic_DNA"/>
</dbReference>
<dbReference type="PIR" id="AI0492">
    <property type="entry name" value="AI0492"/>
</dbReference>
<dbReference type="RefSeq" id="WP_002209608.1">
    <property type="nucleotide sequence ID" value="NZ_WUCM01000035.1"/>
</dbReference>
<dbReference type="RefSeq" id="YP_002348913.1">
    <property type="nucleotide sequence ID" value="NC_003143.1"/>
</dbReference>
<dbReference type="SMR" id="Q8Z9Y1"/>
<dbReference type="STRING" id="214092.YPO4054"/>
<dbReference type="PaxDb" id="214092-YPO4054"/>
<dbReference type="DNASU" id="1149021"/>
<dbReference type="EnsemblBacteria" id="AAS64107">
    <property type="protein sequence ID" value="AAS64107"/>
    <property type="gene ID" value="YP_3966"/>
</dbReference>
<dbReference type="GeneID" id="57974660"/>
<dbReference type="KEGG" id="ype:YPO4054"/>
<dbReference type="KEGG" id="ypk:y4074"/>
<dbReference type="KEGG" id="ypm:YP_3966"/>
<dbReference type="PATRIC" id="fig|214092.21.peg.4593"/>
<dbReference type="eggNOG" id="COG1921">
    <property type="taxonomic scope" value="Bacteria"/>
</dbReference>
<dbReference type="HOGENOM" id="CLU_038142_1_0_6"/>
<dbReference type="OMA" id="GATNRTH"/>
<dbReference type="OrthoDB" id="9787096at2"/>
<dbReference type="UniPathway" id="UPA00906">
    <property type="reaction ID" value="UER00896"/>
</dbReference>
<dbReference type="Proteomes" id="UP000000815">
    <property type="component" value="Chromosome"/>
</dbReference>
<dbReference type="Proteomes" id="UP000001019">
    <property type="component" value="Chromosome"/>
</dbReference>
<dbReference type="Proteomes" id="UP000002490">
    <property type="component" value="Chromosome"/>
</dbReference>
<dbReference type="GO" id="GO:0005737">
    <property type="term" value="C:cytoplasm"/>
    <property type="evidence" value="ECO:0007669"/>
    <property type="project" value="UniProtKB-SubCell"/>
</dbReference>
<dbReference type="GO" id="GO:0004125">
    <property type="term" value="F:L-seryl-tRNA(Sec) selenium transferase activity"/>
    <property type="evidence" value="ECO:0000318"/>
    <property type="project" value="GO_Central"/>
</dbReference>
<dbReference type="GO" id="GO:0001717">
    <property type="term" value="P:conversion of seryl-tRNAsec to selenocys-tRNAsec"/>
    <property type="evidence" value="ECO:0007669"/>
    <property type="project" value="UniProtKB-UniRule"/>
</dbReference>
<dbReference type="GO" id="GO:0001514">
    <property type="term" value="P:selenocysteine incorporation"/>
    <property type="evidence" value="ECO:0007669"/>
    <property type="project" value="UniProtKB-UniRule"/>
</dbReference>
<dbReference type="FunFam" id="3.40.640.10:FF:000028">
    <property type="entry name" value="L-seryl-tRNA(Sec) selenium transferase"/>
    <property type="match status" value="1"/>
</dbReference>
<dbReference type="Gene3D" id="3.90.1150.180">
    <property type="match status" value="1"/>
</dbReference>
<dbReference type="Gene3D" id="3.40.640.10">
    <property type="entry name" value="Type I PLP-dependent aspartate aminotransferase-like (Major domain)"/>
    <property type="match status" value="1"/>
</dbReference>
<dbReference type="HAMAP" id="MF_00423">
    <property type="entry name" value="SelA"/>
    <property type="match status" value="1"/>
</dbReference>
<dbReference type="InterPro" id="IPR015424">
    <property type="entry name" value="PyrdxlP-dep_Trfase"/>
</dbReference>
<dbReference type="InterPro" id="IPR015421">
    <property type="entry name" value="PyrdxlP-dep_Trfase_major"/>
</dbReference>
<dbReference type="InterPro" id="IPR018319">
    <property type="entry name" value="SelA-like"/>
</dbReference>
<dbReference type="InterPro" id="IPR004534">
    <property type="entry name" value="SelA_trans"/>
</dbReference>
<dbReference type="InterPro" id="IPR025862">
    <property type="entry name" value="SelA_trans_N_dom"/>
</dbReference>
<dbReference type="NCBIfam" id="TIGR00474">
    <property type="entry name" value="selA"/>
    <property type="match status" value="1"/>
</dbReference>
<dbReference type="PANTHER" id="PTHR32328">
    <property type="entry name" value="L-SERYL-TRNA(SEC) SELENIUM TRANSFERASE"/>
    <property type="match status" value="1"/>
</dbReference>
<dbReference type="PANTHER" id="PTHR32328:SF0">
    <property type="entry name" value="L-SERYL-TRNA(SEC) SELENIUM TRANSFERASE"/>
    <property type="match status" value="1"/>
</dbReference>
<dbReference type="Pfam" id="PF12390">
    <property type="entry name" value="Se-cys_synth_N"/>
    <property type="match status" value="1"/>
</dbReference>
<dbReference type="Pfam" id="PF03841">
    <property type="entry name" value="SelA"/>
    <property type="match status" value="1"/>
</dbReference>
<dbReference type="SUPFAM" id="SSF53383">
    <property type="entry name" value="PLP-dependent transferases"/>
    <property type="match status" value="1"/>
</dbReference>
<name>SELA_YERPE</name>
<feature type="chain" id="PRO_0000189621" description="L-seryl-tRNA(Sec) selenium transferase">
    <location>
        <begin position="1"/>
        <end position="462"/>
    </location>
</feature>
<feature type="modified residue" description="N6-(pyridoxal phosphate)lysine" evidence="1">
    <location>
        <position position="294"/>
    </location>
</feature>
<gene>
    <name evidence="1" type="primary">selA</name>
    <name type="ordered locus">YPO4054</name>
    <name type="ordered locus">y4074</name>
    <name type="ordered locus">YP_3966</name>
</gene>
<keyword id="KW-0963">Cytoplasm</keyword>
<keyword id="KW-0648">Protein biosynthesis</keyword>
<keyword id="KW-0663">Pyridoxal phosphate</keyword>
<keyword id="KW-1185">Reference proteome</keyword>
<keyword id="KW-0711">Selenium</keyword>
<keyword id="KW-0808">Transferase</keyword>
<sequence length="462" mass="50209">MSAEPHPLYRQLPAIDRLLNEPEMAPLLAEYGPVLLADTLRQLQAEAREYIGQFHTLADWCADWPAALRQRLNQRQPALKPVFNLTGTVLHTNLGRAPLAESAIAAVTDAMRSAVTLEYSLEGAGRGHRDRAVADLLCALTGAEDACIVNNNAAAVFLLLTVMAAGKQVVVSRGELVEIGGAFRIPDVMRQAGCELVEVGTTNRTHLKDYRQAINENTGLLMKVHTSNYSIEGFTAAVSEQQLAALGQECSIPTATDLGSGSLVDMTRYGLPAEPMPQQLIAAGVDLVTFSGDKLLGGPQAGIILGKKQWIERLQQHPLKRALRADKMTLAALDATLRLYQQPDRLVEQLPSLRLLTRPASEIAACAQRLLAPLIACYGTDFTLDIESCWSQIGSGSLPVDRLPSWALTFTPKDGRGSTLEALTARWRTLTKPVIGRVADGRLWLDLRCLEDEAALLRELAS</sequence>